<name>GLAH_SALPK</name>
<accession>B5BEK3</accession>
<protein>
    <recommendedName>
        <fullName evidence="1">Glutarate 2-hydroxylase</fullName>
        <shortName evidence="1">G-2-H</shortName>
        <ecNumber evidence="1">1.14.11.64</ecNumber>
    </recommendedName>
</protein>
<reference key="1">
    <citation type="journal article" date="2009" name="BMC Genomics">
        <title>Pseudogene accumulation in the evolutionary histories of Salmonella enterica serovars Paratyphi A and Typhi.</title>
        <authorList>
            <person name="Holt K.E."/>
            <person name="Thomson N.R."/>
            <person name="Wain J."/>
            <person name="Langridge G.C."/>
            <person name="Hasan R."/>
            <person name="Bhutta Z.A."/>
            <person name="Quail M.A."/>
            <person name="Norbertczak H."/>
            <person name="Walker D."/>
            <person name="Simmonds M."/>
            <person name="White B."/>
            <person name="Bason N."/>
            <person name="Mungall K."/>
            <person name="Dougan G."/>
            <person name="Parkhill J."/>
        </authorList>
    </citation>
    <scope>NUCLEOTIDE SEQUENCE [LARGE SCALE GENOMIC DNA]</scope>
    <source>
        <strain>AKU_12601</strain>
    </source>
</reference>
<organism>
    <name type="scientific">Salmonella paratyphi A (strain AKU_12601)</name>
    <dbReference type="NCBI Taxonomy" id="554290"/>
    <lineage>
        <taxon>Bacteria</taxon>
        <taxon>Pseudomonadati</taxon>
        <taxon>Pseudomonadota</taxon>
        <taxon>Gammaproteobacteria</taxon>
        <taxon>Enterobacterales</taxon>
        <taxon>Enterobacteriaceae</taxon>
        <taxon>Salmonella</taxon>
    </lineage>
</organism>
<comment type="function">
    <text evidence="1">Acts as an alpha-ketoglutarate-dependent dioxygenase catalyzing hydroxylation of glutarate (GA) to L-2-hydroxyglutarate (L2HG). Functions in a L-lysine degradation pathway that proceeds via cadaverine, glutarate and L-2-hydroxyglutarate.</text>
</comment>
<comment type="catalytic activity">
    <reaction evidence="1">
        <text>glutarate + 2-oxoglutarate + O2 = (S)-2-hydroxyglutarate + succinate + CO2</text>
        <dbReference type="Rhea" id="RHEA:13821"/>
        <dbReference type="ChEBI" id="CHEBI:15379"/>
        <dbReference type="ChEBI" id="CHEBI:16526"/>
        <dbReference type="ChEBI" id="CHEBI:16782"/>
        <dbReference type="ChEBI" id="CHEBI:16810"/>
        <dbReference type="ChEBI" id="CHEBI:30031"/>
        <dbReference type="ChEBI" id="CHEBI:30921"/>
        <dbReference type="EC" id="1.14.11.64"/>
    </reaction>
    <physiologicalReaction direction="left-to-right" evidence="1">
        <dbReference type="Rhea" id="RHEA:13822"/>
    </physiologicalReaction>
</comment>
<comment type="cofactor">
    <cofactor evidence="1">
        <name>Fe(2+)</name>
        <dbReference type="ChEBI" id="CHEBI:29033"/>
    </cofactor>
    <text evidence="1">Binds 1 Fe(2+) ion per subunit.</text>
</comment>
<comment type="pathway">
    <text evidence="1">Amino-acid degradation.</text>
</comment>
<comment type="subunit">
    <text evidence="1">Homotetramer.</text>
</comment>
<comment type="similarity">
    <text evidence="1">Belongs to the glutarate hydroxylase family.</text>
</comment>
<gene>
    <name evidence="1" type="primary">glaH</name>
    <name type="ordered locus">SSPA2467</name>
</gene>
<evidence type="ECO:0000255" key="1">
    <source>
        <dbReference type="HAMAP-Rule" id="MF_01083"/>
    </source>
</evidence>
<dbReference type="EC" id="1.14.11.64" evidence="1"/>
<dbReference type="EMBL" id="FM200053">
    <property type="protein sequence ID" value="CAR60701.1"/>
    <property type="molecule type" value="Genomic_DNA"/>
</dbReference>
<dbReference type="RefSeq" id="WP_000993100.1">
    <property type="nucleotide sequence ID" value="NC_011147.1"/>
</dbReference>
<dbReference type="SMR" id="B5BEK3"/>
<dbReference type="KEGG" id="sek:SSPA2467"/>
<dbReference type="HOGENOM" id="CLU_075277_0_0_6"/>
<dbReference type="Proteomes" id="UP000001869">
    <property type="component" value="Chromosome"/>
</dbReference>
<dbReference type="GO" id="GO:0008198">
    <property type="term" value="F:ferrous iron binding"/>
    <property type="evidence" value="ECO:0007669"/>
    <property type="project" value="UniProtKB-UniRule"/>
</dbReference>
<dbReference type="GO" id="GO:0106343">
    <property type="term" value="F:glutarate dioxygenase activity"/>
    <property type="evidence" value="ECO:0007669"/>
    <property type="project" value="UniProtKB-EC"/>
</dbReference>
<dbReference type="GO" id="GO:0050498">
    <property type="term" value="F:oxidoreductase activity, acting on paired donors, with incorporation or reduction of molecular oxygen, with 2-oxoglutarate as one donor, and the other dehydrogenated"/>
    <property type="evidence" value="ECO:0007669"/>
    <property type="project" value="UniProtKB-UniRule"/>
</dbReference>
<dbReference type="GO" id="GO:0019477">
    <property type="term" value="P:L-lysine catabolic process"/>
    <property type="evidence" value="ECO:0007669"/>
    <property type="project" value="UniProtKB-UniRule"/>
</dbReference>
<dbReference type="CDD" id="cd00250">
    <property type="entry name" value="CAS_like"/>
    <property type="match status" value="1"/>
</dbReference>
<dbReference type="FunFam" id="3.60.130.10:FF:000004">
    <property type="entry name" value="Glutarate 2-hydroxylase"/>
    <property type="match status" value="1"/>
</dbReference>
<dbReference type="Gene3D" id="3.60.130.10">
    <property type="entry name" value="Clavaminate synthase-like"/>
    <property type="match status" value="1"/>
</dbReference>
<dbReference type="HAMAP" id="MF_01083">
    <property type="entry name" value="glutarate_hydroxylase"/>
    <property type="match status" value="1"/>
</dbReference>
<dbReference type="InterPro" id="IPR015038">
    <property type="entry name" value="GlaH"/>
</dbReference>
<dbReference type="InterPro" id="IPR042098">
    <property type="entry name" value="TauD-like_sf"/>
</dbReference>
<dbReference type="NCBIfam" id="NF002814">
    <property type="entry name" value="PRK02963.1"/>
    <property type="match status" value="1"/>
</dbReference>
<dbReference type="Pfam" id="PF08943">
    <property type="entry name" value="CsiD"/>
    <property type="match status" value="1"/>
</dbReference>
<dbReference type="SUPFAM" id="SSF51197">
    <property type="entry name" value="Clavaminate synthase-like"/>
    <property type="match status" value="1"/>
</dbReference>
<feature type="chain" id="PRO_1000136873" description="Glutarate 2-hydroxylase">
    <location>
        <begin position="1"/>
        <end position="325"/>
    </location>
</feature>
<feature type="binding site" evidence="1">
    <location>
        <position position="160"/>
    </location>
    <ligand>
        <name>Fe cation</name>
        <dbReference type="ChEBI" id="CHEBI:24875"/>
    </ligand>
</feature>
<feature type="binding site" evidence="1">
    <location>
        <position position="162"/>
    </location>
    <ligand>
        <name>Fe cation</name>
        <dbReference type="ChEBI" id="CHEBI:24875"/>
    </ligand>
</feature>
<feature type="binding site" evidence="1">
    <location>
        <position position="292"/>
    </location>
    <ligand>
        <name>Fe cation</name>
        <dbReference type="ChEBI" id="CHEBI:24875"/>
    </ligand>
</feature>
<proteinExistence type="inferred from homology"/>
<keyword id="KW-0223">Dioxygenase</keyword>
<keyword id="KW-0408">Iron</keyword>
<keyword id="KW-0479">Metal-binding</keyword>
<keyword id="KW-0560">Oxidoreductase</keyword>
<sequence>MNALTAVKANTDDLAQRHTGFTLAPSAQSPRLLALTFTADTTRQFLHQVAQWPVQALEYKSFLRFKIGKILDDLCGNQLQPLLIKTLLNRAQGALLISAEGIDDVAQAEEMVKLATAVAHLIGRSNYDAMSGQYYARFVVKNVDNSDSYLRQPHRVMELHNDGTYVEEVTDYVLMMKIDEQNMEGGNSLLLHLDDWEHLESFFTHPLARRVMRWAAPPSKNVSHDVWHPVFDVDQQGRPVMRYIDQFVQPKDFEEGVWLSELSDALETSQNILSVPVPVGKFLLINNLFWLHGRDRFTPHPDLRRELMRQRGYFAYAASHYQTHQ</sequence>